<protein>
    <recommendedName>
        <fullName>Zinc finger protein 518A</fullName>
    </recommendedName>
</protein>
<reference key="1">
    <citation type="journal article" date="2004" name="Genome Res.">
        <title>The status, quality, and expansion of the NIH full-length cDNA project: the Mammalian Gene Collection (MGC).</title>
        <authorList>
            <consortium name="The MGC Project Team"/>
        </authorList>
    </citation>
    <scope>NUCLEOTIDE SEQUENCE [LARGE SCALE MRNA]</scope>
    <source>
        <tissue>Prostate</tissue>
    </source>
</reference>
<comment type="function">
    <text evidence="1">Through its association with the EHMT1-EHMT2/G9A and PRC2/EED-EZH2 histone methyltransferase complexes may function in gene silencing, regulating repressive post-translational methylation of histone tails at promoters of target genes.</text>
</comment>
<comment type="subcellular location">
    <subcellularLocation>
        <location evidence="1">Nucleus</location>
    </subcellularLocation>
</comment>
<comment type="similarity">
    <text evidence="5">Belongs to the krueppel C2H2-type zinc-finger protein family.</text>
</comment>
<gene>
    <name type="primary">Znf518a</name>
    <name type="synonym">Zfp518</name>
    <name type="synonym">Zfp518a</name>
    <name type="synonym">Znf518</name>
</gene>
<accession>Q499R0</accession>
<organism>
    <name type="scientific">Rattus norvegicus</name>
    <name type="common">Rat</name>
    <dbReference type="NCBI Taxonomy" id="10116"/>
    <lineage>
        <taxon>Eukaryota</taxon>
        <taxon>Metazoa</taxon>
        <taxon>Chordata</taxon>
        <taxon>Craniata</taxon>
        <taxon>Vertebrata</taxon>
        <taxon>Euteleostomi</taxon>
        <taxon>Mammalia</taxon>
        <taxon>Eutheria</taxon>
        <taxon>Euarchontoglires</taxon>
        <taxon>Glires</taxon>
        <taxon>Rodentia</taxon>
        <taxon>Myomorpha</taxon>
        <taxon>Muroidea</taxon>
        <taxon>Muridae</taxon>
        <taxon>Murinae</taxon>
        <taxon>Rattus</taxon>
    </lineage>
</organism>
<keyword id="KW-0156">Chromatin regulator</keyword>
<keyword id="KW-0238">DNA-binding</keyword>
<keyword id="KW-1017">Isopeptide bond</keyword>
<keyword id="KW-0479">Metal-binding</keyword>
<keyword id="KW-0539">Nucleus</keyword>
<keyword id="KW-0597">Phosphoprotein</keyword>
<keyword id="KW-1185">Reference proteome</keyword>
<keyword id="KW-0677">Repeat</keyword>
<keyword id="KW-0804">Transcription</keyword>
<keyword id="KW-0805">Transcription regulation</keyword>
<keyword id="KW-0832">Ubl conjugation</keyword>
<keyword id="KW-0862">Zinc</keyword>
<keyword id="KW-0863">Zinc-finger</keyword>
<proteinExistence type="evidence at transcript level"/>
<name>Z518A_RAT</name>
<evidence type="ECO:0000250" key="1">
    <source>
        <dbReference type="UniProtKB" id="B2RRF6"/>
    </source>
</evidence>
<evidence type="ECO:0000250" key="2">
    <source>
        <dbReference type="UniProtKB" id="Q6AHZ1"/>
    </source>
</evidence>
<evidence type="ECO:0000255" key="3">
    <source>
        <dbReference type="PROSITE-ProRule" id="PRU00042"/>
    </source>
</evidence>
<evidence type="ECO:0000256" key="4">
    <source>
        <dbReference type="SAM" id="MobiDB-lite"/>
    </source>
</evidence>
<evidence type="ECO:0000305" key="5"/>
<dbReference type="EMBL" id="BC099801">
    <property type="protein sequence ID" value="AAH99801.1"/>
    <property type="molecule type" value="mRNA"/>
</dbReference>
<dbReference type="RefSeq" id="NP_001025209.1">
    <property type="nucleotide sequence ID" value="NM_001030038.1"/>
</dbReference>
<dbReference type="RefSeq" id="XP_006231459.1">
    <property type="nucleotide sequence ID" value="XM_006231397.3"/>
</dbReference>
<dbReference type="RefSeq" id="XP_006231460.1">
    <property type="nucleotide sequence ID" value="XM_006231398.3"/>
</dbReference>
<dbReference type="RefSeq" id="XP_008758662.1">
    <property type="nucleotide sequence ID" value="XM_008760440.2"/>
</dbReference>
<dbReference type="RefSeq" id="XP_017444785.1">
    <property type="nucleotide sequence ID" value="XM_017589296.1"/>
</dbReference>
<dbReference type="FunCoup" id="Q499R0">
    <property type="interactions" value="2943"/>
</dbReference>
<dbReference type="STRING" id="10116.ENSRNOP00000051600"/>
<dbReference type="CarbonylDB" id="Q499R0"/>
<dbReference type="GlyGen" id="Q499R0">
    <property type="glycosylation" value="2 sites"/>
</dbReference>
<dbReference type="iPTMnet" id="Q499R0"/>
<dbReference type="PhosphoSitePlus" id="Q499R0"/>
<dbReference type="PaxDb" id="10116-ENSRNOP00000051600"/>
<dbReference type="Ensembl" id="ENSRNOT00000054717.4">
    <property type="protein sequence ID" value="ENSRNOP00000051600.2"/>
    <property type="gene ID" value="ENSRNOG00000036592.4"/>
</dbReference>
<dbReference type="Ensembl" id="ENSRNOT00000097947.1">
    <property type="protein sequence ID" value="ENSRNOP00000092189.1"/>
    <property type="gene ID" value="ENSRNOG00000036592.4"/>
</dbReference>
<dbReference type="Ensembl" id="ENSRNOT00000098938.1">
    <property type="protein sequence ID" value="ENSRNOP00000096129.1"/>
    <property type="gene ID" value="ENSRNOG00000036592.4"/>
</dbReference>
<dbReference type="Ensembl" id="ENSRNOT00000105629.1">
    <property type="protein sequence ID" value="ENSRNOP00000095709.1"/>
    <property type="gene ID" value="ENSRNOG00000036592.4"/>
</dbReference>
<dbReference type="Ensembl" id="ENSRNOT00000111652.1">
    <property type="protein sequence ID" value="ENSRNOP00000080397.1"/>
    <property type="gene ID" value="ENSRNOG00000036592.4"/>
</dbReference>
<dbReference type="GeneID" id="309478"/>
<dbReference type="KEGG" id="rno:309478"/>
<dbReference type="UCSC" id="RGD:1305314">
    <property type="organism name" value="rat"/>
</dbReference>
<dbReference type="AGR" id="RGD:1305314"/>
<dbReference type="CTD" id="72672"/>
<dbReference type="RGD" id="1305314">
    <property type="gene designation" value="Zfp518a"/>
</dbReference>
<dbReference type="eggNOG" id="KOG1721">
    <property type="taxonomic scope" value="Eukaryota"/>
</dbReference>
<dbReference type="GeneTree" id="ENSGT00940000162006"/>
<dbReference type="HOGENOM" id="CLU_005711_0_0_1"/>
<dbReference type="InParanoid" id="Q499R0"/>
<dbReference type="OMA" id="SCVEECM"/>
<dbReference type="OrthoDB" id="6778897at2759"/>
<dbReference type="PhylomeDB" id="Q499R0"/>
<dbReference type="TreeFam" id="TF332842"/>
<dbReference type="PRO" id="PR:Q499R0"/>
<dbReference type="Proteomes" id="UP000002494">
    <property type="component" value="Chromosome 1"/>
</dbReference>
<dbReference type="Bgee" id="ENSRNOG00000036592">
    <property type="expression patterns" value="Expressed in thymus and 19 other cell types or tissues"/>
</dbReference>
<dbReference type="GO" id="GO:0005634">
    <property type="term" value="C:nucleus"/>
    <property type="evidence" value="ECO:0007669"/>
    <property type="project" value="UniProtKB-SubCell"/>
</dbReference>
<dbReference type="GO" id="GO:0003677">
    <property type="term" value="F:DNA binding"/>
    <property type="evidence" value="ECO:0007669"/>
    <property type="project" value="UniProtKB-KW"/>
</dbReference>
<dbReference type="GO" id="GO:0000981">
    <property type="term" value="F:DNA-binding transcription factor activity, RNA polymerase II-specific"/>
    <property type="evidence" value="ECO:0000318"/>
    <property type="project" value="GO_Central"/>
</dbReference>
<dbReference type="GO" id="GO:0008270">
    <property type="term" value="F:zinc ion binding"/>
    <property type="evidence" value="ECO:0007669"/>
    <property type="project" value="UniProtKB-KW"/>
</dbReference>
<dbReference type="GO" id="GO:0006325">
    <property type="term" value="P:chromatin organization"/>
    <property type="evidence" value="ECO:0007669"/>
    <property type="project" value="UniProtKB-KW"/>
</dbReference>
<dbReference type="GO" id="GO:0006357">
    <property type="term" value="P:regulation of transcription by RNA polymerase II"/>
    <property type="evidence" value="ECO:0000318"/>
    <property type="project" value="GO_Central"/>
</dbReference>
<dbReference type="FunFam" id="3.30.160.60:FF:001423">
    <property type="entry name" value="Zinc finger protein 518A"/>
    <property type="match status" value="1"/>
</dbReference>
<dbReference type="Gene3D" id="3.30.160.60">
    <property type="entry name" value="Classic Zinc Finger"/>
    <property type="match status" value="2"/>
</dbReference>
<dbReference type="InterPro" id="IPR036236">
    <property type="entry name" value="Znf_C2H2_sf"/>
</dbReference>
<dbReference type="InterPro" id="IPR013087">
    <property type="entry name" value="Znf_C2H2_type"/>
</dbReference>
<dbReference type="PANTHER" id="PTHR24392">
    <property type="entry name" value="ZINC FINGER PROTEIN"/>
    <property type="match status" value="1"/>
</dbReference>
<dbReference type="PANTHER" id="PTHR24392:SF39">
    <property type="entry name" value="ZINC FINGER PROTEIN 518A"/>
    <property type="match status" value="1"/>
</dbReference>
<dbReference type="SMART" id="SM00355">
    <property type="entry name" value="ZnF_C2H2"/>
    <property type="match status" value="7"/>
</dbReference>
<dbReference type="SUPFAM" id="SSF57667">
    <property type="entry name" value="beta-beta-alpha zinc fingers"/>
    <property type="match status" value="1"/>
</dbReference>
<dbReference type="PROSITE" id="PS00028">
    <property type="entry name" value="ZINC_FINGER_C2H2_1"/>
    <property type="match status" value="2"/>
</dbReference>
<dbReference type="PROSITE" id="PS50157">
    <property type="entry name" value="ZINC_FINGER_C2H2_2"/>
    <property type="match status" value="1"/>
</dbReference>
<feature type="chain" id="PRO_0000349266" description="Zinc finger protein 518A">
    <location>
        <begin position="1"/>
        <end position="1478"/>
    </location>
</feature>
<feature type="zinc finger region" description="C2H2-type 1" evidence="3">
    <location>
        <begin position="152"/>
        <end position="174"/>
    </location>
</feature>
<feature type="zinc finger region" description="C2H2-type 2" evidence="3">
    <location>
        <begin position="209"/>
        <end position="231"/>
    </location>
</feature>
<feature type="zinc finger region" description="C2H2-type 3" evidence="3">
    <location>
        <begin position="236"/>
        <end position="258"/>
    </location>
</feature>
<feature type="zinc finger region" description="C2H2-type 4" evidence="3">
    <location>
        <begin position="264"/>
        <end position="287"/>
    </location>
</feature>
<feature type="zinc finger region" description="C2H2-type 5" evidence="3">
    <location>
        <begin position="1444"/>
        <end position="1466"/>
    </location>
</feature>
<feature type="region of interest" description="Disordered" evidence="4">
    <location>
        <begin position="355"/>
        <end position="394"/>
    </location>
</feature>
<feature type="region of interest" description="Disordered" evidence="4">
    <location>
        <begin position="464"/>
        <end position="484"/>
    </location>
</feature>
<feature type="region of interest" description="Disordered" evidence="4">
    <location>
        <begin position="656"/>
        <end position="694"/>
    </location>
</feature>
<feature type="compositionally biased region" description="Basic and acidic residues" evidence="4">
    <location>
        <begin position="368"/>
        <end position="388"/>
    </location>
</feature>
<feature type="compositionally biased region" description="Low complexity" evidence="4">
    <location>
        <begin position="670"/>
        <end position="681"/>
    </location>
</feature>
<feature type="modified residue" description="Phosphoserine" evidence="2">
    <location>
        <position position="652"/>
    </location>
</feature>
<feature type="cross-link" description="Glycyl lysine isopeptide (Lys-Gly) (interchain with G-Cter in SUMO2)" evidence="2">
    <location>
        <position position="358"/>
    </location>
</feature>
<feature type="cross-link" description="Glycyl lysine isopeptide (Lys-Gly) (interchain with G-Cter in SUMO2)" evidence="2">
    <location>
        <position position="390"/>
    </location>
</feature>
<feature type="cross-link" description="Glycyl lysine isopeptide (Lys-Gly) (interchain with G-Cter in SUMO2)" evidence="2">
    <location>
        <position position="428"/>
    </location>
</feature>
<feature type="cross-link" description="Glycyl lysine isopeptide (Lys-Gly) (interchain with G-Cter in SUMO2)" evidence="2">
    <location>
        <position position="518"/>
    </location>
</feature>
<feature type="cross-link" description="Glycyl lysine isopeptide (Lys-Gly) (interchain with G-Cter in SUMO2)" evidence="2">
    <location>
        <position position="707"/>
    </location>
</feature>
<feature type="cross-link" description="Glycyl lysine isopeptide (Lys-Gly) (interchain with G-Cter in SUMO2)" evidence="2">
    <location>
        <position position="792"/>
    </location>
</feature>
<feature type="cross-link" description="Glycyl lysine isopeptide (Lys-Gly) (interchain with G-Cter in SUMO2)" evidence="2">
    <location>
        <position position="882"/>
    </location>
</feature>
<feature type="cross-link" description="Glycyl lysine isopeptide (Lys-Gly) (interchain with G-Cter in SUMO2)" evidence="2">
    <location>
        <position position="895"/>
    </location>
</feature>
<feature type="cross-link" description="Glycyl lysine isopeptide (Lys-Gly) (interchain with G-Cter in SUMO2)" evidence="2">
    <location>
        <position position="987"/>
    </location>
</feature>
<feature type="cross-link" description="Glycyl lysine isopeptide (Lys-Gly) (interchain with G-Cter in SUMO2)" evidence="2">
    <location>
        <position position="1008"/>
    </location>
</feature>
<feature type="cross-link" description="Glycyl lysine isopeptide (Lys-Gly) (interchain with G-Cter in SUMO2)" evidence="2">
    <location>
        <position position="1041"/>
    </location>
</feature>
<feature type="cross-link" description="Glycyl lysine isopeptide (Lys-Gly) (interchain with G-Cter in SUMO2)" evidence="2">
    <location>
        <position position="1055"/>
    </location>
</feature>
<feature type="cross-link" description="Glycyl lysine isopeptide (Lys-Gly) (interchain with G-Cter in SUMO2)" evidence="2">
    <location>
        <position position="1078"/>
    </location>
</feature>
<feature type="cross-link" description="Glycyl lysine isopeptide (Lys-Gly) (interchain with G-Cter in SUMO2)" evidence="2">
    <location>
        <position position="1180"/>
    </location>
</feature>
<feature type="cross-link" description="Glycyl lysine isopeptide (Lys-Gly) (interchain with G-Cter in SUMO2)" evidence="2">
    <location>
        <position position="1441"/>
    </location>
</feature>
<sequence>MPFEQTQLFCDEKQTILKKIDTRNEIPDTIKSIPIPKISEAGFHYEPKNVNICLPKINIPNEILMKHEVEKYRKLFQSKPQTARKSVSVRTVSCAKGCAQRCESERAEDEAGKMCAKILNFTCSKCQDRTQYSPNDLQKHFEMWHHGELPSFPCEMCSFSASDFQIFKQHRKTHRNTFVKCDICNSERSYTLLDLTKHFTSKHCVNGNFQCEECRFFTQDVGTFVQHIHRHKEVHYKCGKCHHLCFTKGELQKHLRVHSGTLPFTCHYCSYGAIHKDQLVRHVITLHKEHLYAKEKLERDQYDKRVAKTTTGLKLILKRYKIGPTKTFWKRKTIASGNDESIGKNAQAFNIVSKTQTKSEDQSQEQLNEEKGGRQHCEDGDKPIESGSEKATVLSTGQCNKADEGASAPSSVLSAVQGPTVLLVRNNKITIPANYSAKFMGFKMVDGRQHIVIKLLPANKQILPSPALQPNTEKESTANLPPQAMDNTGFATGLTAMNDTDFVKAAPLSCSSPELPRKVISEKETAFISEKNNMLQMVDDSKSVTSLPTPSESVTSVRLTTKVEARDNVDLWENPSTQSHPDLIGTSINSPDKVNLTIRPNAYSCGDMHNYCINYVNSELPAESSNCFEFSNQGSLPFHNYSKVNNKRRRFSRGAVCENLQRESSNKTVTQQSTSDSDTTSPLRKESSNSDSLLASISPLSGTLKIKTEIEEPCDLEETQNFNEQSLFTNENQNLLNMTEEPKWDDIPCAGSPMMPRITSVFSLQSEQASEFLPPEVNQLLQDTLKPRSDIKEDSNNIPSKNLPLDCDQTLKKSKEEVIKSSKDFQMQDIISVPSASVGVNVPANDLNLKCNGQEKQALSVLQDVRDPGVTTKIPSIITLLKTQSDAIITQQLVKDKLRTTTQHSGPVYVQNPLLTSEQKNPVFVQTPKGFIIPLHVANKPGLHVFSGRPVPLVNTQSVPAALLVNKKPGVVLTVNNGKPEGVPTVKTENVHSYGTVTKEPCRTPFLKAEHNRYCLTPGLCSSIGSCVNMKTCSENTLPLKGSYIIKTSVSSSVKAVPFANVLPEQQGPNVNVLDAVKQQNESLPKASLYTLMPDGKQAVFFKCMMPNNTKLLKPRLVQNSTYQRIQPKRPAGAPQKILLKIFNPVLSMSAVNNLSVGNSASSFQKEIVPSKPTVHGEQKVPQSSRDALPVSVQDLMPANEAVLSSTAACPGSSEEPVHISERSETRVSRSKANCTIERNFNKRKTCKNKFAKIKTRISQDSETAFVSRNRSCKRKYIDNYQEPPRKKSATHRKCKERANAEDVQETFGFSRPRLPKDSGRTLRLFPFNSEQLVKCPRRNQPVVVLNHPDADAPEVERVMKTITKFNGRVLKVSLSKATINALLKPVSITSETTYSDFSKRHKMLKPVNSVKERFVLKLTLKKTSKNNYQIVKTTSEDVLKSKFNCWFCGRVFDNQDVWAGHGQRHLVEATKDWNMLE</sequence>